<evidence type="ECO:0000255" key="1">
    <source>
        <dbReference type="HAMAP-Rule" id="MF_00501"/>
    </source>
</evidence>
<evidence type="ECO:0000305" key="2"/>
<protein>
    <recommendedName>
        <fullName evidence="1">Large ribosomal subunit protein bL31</fullName>
    </recommendedName>
    <alternativeName>
        <fullName evidence="2">50S ribosomal protein L31</fullName>
    </alternativeName>
</protein>
<comment type="function">
    <text evidence="1">Binds the 23S rRNA.</text>
</comment>
<comment type="cofactor">
    <cofactor evidence="1">
        <name>Zn(2+)</name>
        <dbReference type="ChEBI" id="CHEBI:29105"/>
    </cofactor>
    <text evidence="1">Binds 1 zinc ion per subunit.</text>
</comment>
<comment type="subunit">
    <text evidence="1">Part of the 50S ribosomal subunit.</text>
</comment>
<comment type="similarity">
    <text evidence="1">Belongs to the bacterial ribosomal protein bL31 family. Type A subfamily.</text>
</comment>
<keyword id="KW-0479">Metal-binding</keyword>
<keyword id="KW-1185">Reference proteome</keyword>
<keyword id="KW-0687">Ribonucleoprotein</keyword>
<keyword id="KW-0689">Ribosomal protein</keyword>
<keyword id="KW-0694">RNA-binding</keyword>
<keyword id="KW-0699">rRNA-binding</keyword>
<keyword id="KW-0862">Zinc</keyword>
<reference key="1">
    <citation type="journal article" date="2002" name="J. Bacteriol.">
        <title>Whole-genome comparison of Mycobacterium tuberculosis clinical and laboratory strains.</title>
        <authorList>
            <person name="Fleischmann R.D."/>
            <person name="Alland D."/>
            <person name="Eisen J.A."/>
            <person name="Carpenter L."/>
            <person name="White O."/>
            <person name="Peterson J.D."/>
            <person name="DeBoy R.T."/>
            <person name="Dodson R.J."/>
            <person name="Gwinn M.L."/>
            <person name="Haft D.H."/>
            <person name="Hickey E.K."/>
            <person name="Kolonay J.F."/>
            <person name="Nelson W.C."/>
            <person name="Umayam L.A."/>
            <person name="Ermolaeva M.D."/>
            <person name="Salzberg S.L."/>
            <person name="Delcher A."/>
            <person name="Utterback T.R."/>
            <person name="Weidman J.F."/>
            <person name="Khouri H.M."/>
            <person name="Gill J."/>
            <person name="Mikula A."/>
            <person name="Bishai W."/>
            <person name="Jacobs W.R. Jr."/>
            <person name="Venter J.C."/>
            <person name="Fraser C.M."/>
        </authorList>
    </citation>
    <scope>NUCLEOTIDE SEQUENCE [LARGE SCALE GENOMIC DNA]</scope>
    <source>
        <strain>CDC 1551 / Oshkosh</strain>
    </source>
</reference>
<organism>
    <name type="scientific">Mycobacterium tuberculosis (strain CDC 1551 / Oshkosh)</name>
    <dbReference type="NCBI Taxonomy" id="83331"/>
    <lineage>
        <taxon>Bacteria</taxon>
        <taxon>Bacillati</taxon>
        <taxon>Actinomycetota</taxon>
        <taxon>Actinomycetes</taxon>
        <taxon>Mycobacteriales</taxon>
        <taxon>Mycobacteriaceae</taxon>
        <taxon>Mycobacterium</taxon>
        <taxon>Mycobacterium tuberculosis complex</taxon>
    </lineage>
</organism>
<sequence>MKSDIHPAYEETTVVCGCGNTFQTRSTKPGGRIVVEVCSQCHPFYTGKQKILDSGGRVARFEKRYGKRKVGADKAVSTGK</sequence>
<accession>P9WHA0</accession>
<accession>L0T7V3</accession>
<accession>P66187</accession>
<accession>Q10608</accession>
<gene>
    <name evidence="1" type="primary">rpmE</name>
    <name type="ordered locus">MT1337</name>
</gene>
<name>RL31_MYCTO</name>
<dbReference type="EMBL" id="AE000516">
    <property type="protein sequence ID" value="AAK45599.1"/>
    <property type="molecule type" value="Genomic_DNA"/>
</dbReference>
<dbReference type="PIR" id="F70773">
    <property type="entry name" value="F70773"/>
</dbReference>
<dbReference type="RefSeq" id="WP_003406668.1">
    <property type="nucleotide sequence ID" value="NZ_KK341227.1"/>
</dbReference>
<dbReference type="SMR" id="P9WHA0"/>
<dbReference type="GeneID" id="45425272"/>
<dbReference type="KEGG" id="mtc:MT1337"/>
<dbReference type="PATRIC" id="fig|83331.31.peg.1444"/>
<dbReference type="HOGENOM" id="CLU_114306_4_0_11"/>
<dbReference type="Proteomes" id="UP000001020">
    <property type="component" value="Chromosome"/>
</dbReference>
<dbReference type="GO" id="GO:1990904">
    <property type="term" value="C:ribonucleoprotein complex"/>
    <property type="evidence" value="ECO:0007669"/>
    <property type="project" value="UniProtKB-KW"/>
</dbReference>
<dbReference type="GO" id="GO:0005840">
    <property type="term" value="C:ribosome"/>
    <property type="evidence" value="ECO:0007669"/>
    <property type="project" value="UniProtKB-KW"/>
</dbReference>
<dbReference type="GO" id="GO:0046872">
    <property type="term" value="F:metal ion binding"/>
    <property type="evidence" value="ECO:0007669"/>
    <property type="project" value="UniProtKB-KW"/>
</dbReference>
<dbReference type="GO" id="GO:0019843">
    <property type="term" value="F:rRNA binding"/>
    <property type="evidence" value="ECO:0007669"/>
    <property type="project" value="UniProtKB-KW"/>
</dbReference>
<dbReference type="GO" id="GO:0003735">
    <property type="term" value="F:structural constituent of ribosome"/>
    <property type="evidence" value="ECO:0007669"/>
    <property type="project" value="InterPro"/>
</dbReference>
<dbReference type="GO" id="GO:0006412">
    <property type="term" value="P:translation"/>
    <property type="evidence" value="ECO:0007669"/>
    <property type="project" value="UniProtKB-UniRule"/>
</dbReference>
<dbReference type="Gene3D" id="4.10.830.30">
    <property type="entry name" value="Ribosomal protein L31"/>
    <property type="match status" value="1"/>
</dbReference>
<dbReference type="HAMAP" id="MF_00501">
    <property type="entry name" value="Ribosomal_bL31_1"/>
    <property type="match status" value="1"/>
</dbReference>
<dbReference type="InterPro" id="IPR034704">
    <property type="entry name" value="Ribosomal_bL28/bL31-like_sf"/>
</dbReference>
<dbReference type="InterPro" id="IPR002150">
    <property type="entry name" value="Ribosomal_bL31"/>
</dbReference>
<dbReference type="InterPro" id="IPR027491">
    <property type="entry name" value="Ribosomal_bL31_A"/>
</dbReference>
<dbReference type="InterPro" id="IPR042105">
    <property type="entry name" value="Ribosomal_bL31_sf"/>
</dbReference>
<dbReference type="NCBIfam" id="TIGR00105">
    <property type="entry name" value="L31"/>
    <property type="match status" value="1"/>
</dbReference>
<dbReference type="NCBIfam" id="NF000612">
    <property type="entry name" value="PRK00019.1"/>
    <property type="match status" value="1"/>
</dbReference>
<dbReference type="NCBIfam" id="NF001809">
    <property type="entry name" value="PRK00528.1"/>
    <property type="match status" value="1"/>
</dbReference>
<dbReference type="PANTHER" id="PTHR33280">
    <property type="entry name" value="50S RIBOSOMAL PROTEIN L31, CHLOROPLASTIC"/>
    <property type="match status" value="1"/>
</dbReference>
<dbReference type="PANTHER" id="PTHR33280:SF1">
    <property type="entry name" value="LARGE RIBOSOMAL SUBUNIT PROTEIN BL31C"/>
    <property type="match status" value="1"/>
</dbReference>
<dbReference type="Pfam" id="PF01197">
    <property type="entry name" value="Ribosomal_L31"/>
    <property type="match status" value="1"/>
</dbReference>
<dbReference type="PRINTS" id="PR01249">
    <property type="entry name" value="RIBOSOMALL31"/>
</dbReference>
<dbReference type="SUPFAM" id="SSF143800">
    <property type="entry name" value="L28p-like"/>
    <property type="match status" value="1"/>
</dbReference>
<dbReference type="PROSITE" id="PS01143">
    <property type="entry name" value="RIBOSOMAL_L31"/>
    <property type="match status" value="1"/>
</dbReference>
<proteinExistence type="inferred from homology"/>
<feature type="chain" id="PRO_0000428223" description="Large ribosomal subunit protein bL31">
    <location>
        <begin position="1"/>
        <end position="80"/>
    </location>
</feature>
<feature type="binding site" evidence="1">
    <location>
        <position position="16"/>
    </location>
    <ligand>
        <name>Zn(2+)</name>
        <dbReference type="ChEBI" id="CHEBI:29105"/>
    </ligand>
</feature>
<feature type="binding site" evidence="1">
    <location>
        <position position="18"/>
    </location>
    <ligand>
        <name>Zn(2+)</name>
        <dbReference type="ChEBI" id="CHEBI:29105"/>
    </ligand>
</feature>
<feature type="binding site" evidence="1">
    <location>
        <position position="38"/>
    </location>
    <ligand>
        <name>Zn(2+)</name>
        <dbReference type="ChEBI" id="CHEBI:29105"/>
    </ligand>
</feature>
<feature type="binding site" evidence="1">
    <location>
        <position position="41"/>
    </location>
    <ligand>
        <name>Zn(2+)</name>
        <dbReference type="ChEBI" id="CHEBI:29105"/>
    </ligand>
</feature>